<accession>Q5AQ36</accession>
<accession>A0A1D8PEH9</accession>
<accession>Q5APJ3</accession>
<accession>Q8X0Z8</accession>
<evidence type="ECO:0000250" key="1"/>
<evidence type="ECO:0000255" key="2"/>
<evidence type="ECO:0000255" key="3">
    <source>
        <dbReference type="PROSITE-ProRule" id="PRU00192"/>
    </source>
</evidence>
<evidence type="ECO:0000256" key="4">
    <source>
        <dbReference type="SAM" id="MobiDB-lite"/>
    </source>
</evidence>
<evidence type="ECO:0000269" key="5">
    <source>
    </source>
</evidence>
<evidence type="ECO:0000269" key="6">
    <source>
    </source>
</evidence>
<evidence type="ECO:0000269" key="7">
    <source>
    </source>
</evidence>
<evidence type="ECO:0000269" key="8">
    <source>
    </source>
</evidence>
<evidence type="ECO:0000269" key="9">
    <source>
    </source>
</evidence>
<evidence type="ECO:0000269" key="10">
    <source>
    </source>
</evidence>
<evidence type="ECO:0000269" key="11">
    <source>
    </source>
</evidence>
<evidence type="ECO:0000305" key="12"/>
<protein>
    <recommendedName>
        <fullName>High osmolarity signaling protein SHO1</fullName>
    </recommendedName>
    <alternativeName>
        <fullName>Osmosensor SHO1</fullName>
    </alternativeName>
</protein>
<reference key="1">
    <citation type="journal article" date="2005" name="Mol. Cell. Biol.">
        <title>The Sho1 adaptor protein links oxidative stress to morphogenesis and cell wall biosynthesis in the fungal pathogen Candida albicans.</title>
        <authorList>
            <person name="Roman E."/>
            <person name="Nombela C."/>
            <person name="Pla J."/>
        </authorList>
    </citation>
    <scope>NUCLEOTIDE SEQUENCE [GENOMIC DNA]</scope>
    <scope>FUNCTION</scope>
    <source>
        <strain>ATCC 64385 / 1001</strain>
    </source>
</reference>
<reference key="2">
    <citation type="journal article" date="2004" name="Proc. Natl. Acad. Sci. U.S.A.">
        <title>The diploid genome sequence of Candida albicans.</title>
        <authorList>
            <person name="Jones T."/>
            <person name="Federspiel N.A."/>
            <person name="Chibana H."/>
            <person name="Dungan J."/>
            <person name="Kalman S."/>
            <person name="Magee B.B."/>
            <person name="Newport G."/>
            <person name="Thorstenson Y.R."/>
            <person name="Agabian N."/>
            <person name="Magee P.T."/>
            <person name="Davis R.W."/>
            <person name="Scherer S."/>
        </authorList>
    </citation>
    <scope>NUCLEOTIDE SEQUENCE [LARGE SCALE GENOMIC DNA]</scope>
    <source>
        <strain>SC5314 / ATCC MYA-2876</strain>
    </source>
</reference>
<reference key="3">
    <citation type="journal article" date="2007" name="Genome Biol.">
        <title>Assembly of the Candida albicans genome into sixteen supercontigs aligned on the eight chromosomes.</title>
        <authorList>
            <person name="van het Hoog M."/>
            <person name="Rast T.J."/>
            <person name="Martchenko M."/>
            <person name="Grindle S."/>
            <person name="Dignard D."/>
            <person name="Hogues H."/>
            <person name="Cuomo C."/>
            <person name="Berriman M."/>
            <person name="Scherer S."/>
            <person name="Magee B.B."/>
            <person name="Whiteway M."/>
            <person name="Chibana H."/>
            <person name="Nantel A."/>
            <person name="Magee P.T."/>
        </authorList>
    </citation>
    <scope>GENOME REANNOTATION</scope>
    <source>
        <strain>SC5314 / ATCC MYA-2876</strain>
    </source>
</reference>
<reference key="4">
    <citation type="journal article" date="2013" name="Genome Biol.">
        <title>Assembly of a phased diploid Candida albicans genome facilitates allele-specific measurements and provides a simple model for repeat and indel structure.</title>
        <authorList>
            <person name="Muzzey D."/>
            <person name="Schwartz K."/>
            <person name="Weissman J.S."/>
            <person name="Sherlock G."/>
        </authorList>
    </citation>
    <scope>NUCLEOTIDE SEQUENCE [LARGE SCALE GENOMIC DNA]</scope>
    <scope>GENOME REANNOTATION</scope>
    <source>
        <strain>SC5314 / ATCC MYA-2876</strain>
    </source>
</reference>
<reference key="5">
    <citation type="journal article" date="2005" name="Antimicrob. Agents Chemother.">
        <title>Genome-wide expression profiling of the response to azole, polyene, echinocandin, and pyrimidine antifungal agents in Candida albicans.</title>
        <authorList>
            <person name="Liu T.T."/>
            <person name="Lee R.E."/>
            <person name="Barker K.S."/>
            <person name="Lee R.E."/>
            <person name="Wei L."/>
            <person name="Homayouni R."/>
            <person name="Rogers P.D."/>
        </authorList>
    </citation>
    <scope>INDUCTION</scope>
</reference>
<reference key="6">
    <citation type="journal article" date="2009" name="Eukaryot. Cell">
        <title>Msb2 signaling mucin controls activation of Cek1 mitogen-activated protein kinase in Candida albicans.</title>
        <authorList>
            <person name="Roman E."/>
            <person name="Cottier F."/>
            <person name="Ernst J.F."/>
            <person name="Pla J."/>
        </authorList>
    </citation>
    <scope>FUNCTION</scope>
</reference>
<reference key="7">
    <citation type="journal article" date="2009" name="FEMS Yeast Res.">
        <title>The Cek1 MAPK is a short-lived protein regulated by quorum sensing in the fungal pathogen Candida albicans.</title>
        <authorList>
            <person name="Roman E."/>
            <person name="Alonso-Monge R."/>
            <person name="Gong Q."/>
            <person name="Li D."/>
            <person name="Calderone R."/>
            <person name="Pla J."/>
        </authorList>
    </citation>
    <scope>FUNCTION</scope>
</reference>
<reference key="8">
    <citation type="journal article" date="2009" name="Fungal Genet. Biol.">
        <title>The Candida albicans histidine kinase Chk1p: signaling and cell wall mannan.</title>
        <authorList>
            <person name="Li D."/>
            <person name="Williams D."/>
            <person name="Lowman D."/>
            <person name="Monteiro M.A."/>
            <person name="Tan X."/>
            <person name="Kruppa M."/>
            <person name="Fonzi W."/>
            <person name="Roman E."/>
            <person name="Pla J."/>
            <person name="Calderone R."/>
        </authorList>
    </citation>
    <scope>FUNCTION</scope>
</reference>
<reference key="9">
    <citation type="journal article" date="2010" name="FEMS Yeast Res.">
        <title>Functional analysis of Candida albicans genes encoding SH3-domain-containing proteins.</title>
        <authorList>
            <person name="Reijnst P."/>
            <person name="Walther A."/>
            <person name="Wendland J."/>
        </authorList>
    </citation>
    <scope>DOMAIN</scope>
</reference>
<reference key="10">
    <citation type="journal article" date="2010" name="Mol. Microbiol.">
        <title>A Candida albicans cell wall-linked protein promotes invasive filamentation into semi-solid medium.</title>
        <authorList>
            <person name="Zucchi P.C."/>
            <person name="Davis T.R."/>
            <person name="Kumamoto C.A."/>
        </authorList>
    </citation>
    <scope>FUNCTION</scope>
</reference>
<reference key="11">
    <citation type="journal article" date="2011" name="Mol. Microbiol.">
        <title>Damage to the glycoshield activates PMT-directed O-mannosylation via the Msb2-Cek1 pathway in Candida albicans.</title>
        <authorList>
            <person name="Cantero P.D."/>
            <person name="Ernst J.F."/>
        </authorList>
    </citation>
    <scope>FUNCTION</scope>
</reference>
<gene>
    <name type="primary">SHO1</name>
    <name type="synonym">SSU81</name>
    <name type="ordered locus">CAALFM_C109140CA</name>
    <name type="ORF">CaO19.12235</name>
    <name type="ORF">CaO19.4772</name>
</gene>
<sequence>MGFSLSNFTSDPFAISTVSFGIMAWVVAIAGAASSKQENFPHFSWWGISYQIVIILIIFVLYANNNIELYKFTLVGLVSIAFIYTTNSTNNLIYNSNSAGNLCCAAGCILLSILNLIWILYFGGHPESPTNQFIDSFSLRGQGHEQLGSGSHNHNANNANNNIPIGAGNAIIGKGEMSPYDDRFAASGVNQPTSESLRLASGPQMGNGPFTTTGAIINPNLQQPLSGSIGGSAHHTPTNINNNNNNNNNTGYMTSSHLTGLENFSSPHVPGSGAGAGLGVGAGRDLTHNSNGGGGGSGGGPASANNSNNTNKRNTIYTDSETGTGITFRYKAKALYSYDANPDDINEISFVKDEILEVDDIDGKWWQARRANGQVGICPSNYVKLLDT</sequence>
<keyword id="KW-1003">Cell membrane</keyword>
<keyword id="KW-0472">Membrane</keyword>
<keyword id="KW-1185">Reference proteome</keyword>
<keyword id="KW-0728">SH3 domain</keyword>
<keyword id="KW-0346">Stress response</keyword>
<keyword id="KW-0812">Transmembrane</keyword>
<keyword id="KW-1133">Transmembrane helix</keyword>
<organism>
    <name type="scientific">Candida albicans (strain SC5314 / ATCC MYA-2876)</name>
    <name type="common">Yeast</name>
    <dbReference type="NCBI Taxonomy" id="237561"/>
    <lineage>
        <taxon>Eukaryota</taxon>
        <taxon>Fungi</taxon>
        <taxon>Dikarya</taxon>
        <taxon>Ascomycota</taxon>
        <taxon>Saccharomycotina</taxon>
        <taxon>Pichiomycetes</taxon>
        <taxon>Debaryomycetaceae</taxon>
        <taxon>Candida/Lodderomyces clade</taxon>
        <taxon>Candida</taxon>
    </lineage>
</organism>
<name>SHO1_CANAL</name>
<comment type="function">
    <text evidence="6 7 8 9 10 11">Plasma membrane osmosensor that activates the high osmolarity glycerol (HOG) MAPK signaling pathway in response to high osmolarity. Mediates resistance to oxidative stress. Controls the activation of the CEK1 MAP kinase. Influences the molecular weight and polymer distribution of cell wall mannan. Involved in invasive filamentation into semi-solid medium and plays a role in morphological dimorphic transition which is a differentiation program characteristic of C.albicans and which is known to play a major role in pathogenesis.</text>
</comment>
<comment type="subunit">
    <text evidence="1">Forms homooligomers.</text>
</comment>
<comment type="subcellular location">
    <subcellularLocation>
        <location evidence="1">Cell membrane</location>
        <topology evidence="1">Multi-pass membrane protein</topology>
    </subcellularLocation>
</comment>
<comment type="induction">
    <text evidence="5">Repressed by caspofungin.</text>
</comment>
<comment type="similarity">
    <text evidence="12">Belongs to the SHO1 family.</text>
</comment>
<dbReference type="EMBL" id="AJ272003">
    <property type="protein sequence ID" value="CAC81238.1"/>
    <property type="molecule type" value="Genomic_DNA"/>
</dbReference>
<dbReference type="EMBL" id="CP017623">
    <property type="protein sequence ID" value="AOW26548.1"/>
    <property type="molecule type" value="Genomic_DNA"/>
</dbReference>
<dbReference type="RefSeq" id="XP_723458.2">
    <property type="nucleotide sequence ID" value="XM_718365.2"/>
</dbReference>
<dbReference type="SMR" id="Q5AQ36"/>
<dbReference type="FunCoup" id="Q5AQ36">
    <property type="interactions" value="173"/>
</dbReference>
<dbReference type="STRING" id="237561.Q5AQ36"/>
<dbReference type="EnsemblFungi" id="C1_09140C_A-T">
    <property type="protein sequence ID" value="C1_09140C_A-T-p1"/>
    <property type="gene ID" value="C1_09140C_A"/>
</dbReference>
<dbReference type="GeneID" id="3634944"/>
<dbReference type="KEGG" id="cal:CAALFM_C109140CA"/>
<dbReference type="CGD" id="CAL0000185371">
    <property type="gene designation" value="SSU81"/>
</dbReference>
<dbReference type="VEuPathDB" id="FungiDB:C1_09140C_A"/>
<dbReference type="eggNOG" id="ENOG502QW7A">
    <property type="taxonomic scope" value="Eukaryota"/>
</dbReference>
<dbReference type="HOGENOM" id="CLU_043316_0_0_1"/>
<dbReference type="InParanoid" id="Q5AQ36"/>
<dbReference type="OrthoDB" id="5983572at2759"/>
<dbReference type="PHI-base" id="PHI:3022"/>
<dbReference type="PRO" id="PR:Q5AQ36"/>
<dbReference type="Proteomes" id="UP000000559">
    <property type="component" value="Chromosome 1"/>
</dbReference>
<dbReference type="GO" id="GO:0030864">
    <property type="term" value="C:cortical actin cytoskeleton"/>
    <property type="evidence" value="ECO:0000318"/>
    <property type="project" value="GO_Central"/>
</dbReference>
<dbReference type="GO" id="GO:0005886">
    <property type="term" value="C:plasma membrane"/>
    <property type="evidence" value="ECO:0007669"/>
    <property type="project" value="UniProtKB-SubCell"/>
</dbReference>
<dbReference type="GO" id="GO:0030427">
    <property type="term" value="C:site of polarized growth"/>
    <property type="evidence" value="ECO:0000318"/>
    <property type="project" value="GO_Central"/>
</dbReference>
<dbReference type="GO" id="GO:0051015">
    <property type="term" value="F:actin filament binding"/>
    <property type="evidence" value="ECO:0000318"/>
    <property type="project" value="GO_Central"/>
</dbReference>
<dbReference type="GO" id="GO:0000902">
    <property type="term" value="P:cell morphogenesis"/>
    <property type="evidence" value="ECO:0000315"/>
    <property type="project" value="CGD"/>
</dbReference>
<dbReference type="GO" id="GO:0031589">
    <property type="term" value="P:cell-substrate adhesion"/>
    <property type="evidence" value="ECO:0000315"/>
    <property type="project" value="CGD"/>
</dbReference>
<dbReference type="GO" id="GO:0036244">
    <property type="term" value="P:cellular response to neutral pH"/>
    <property type="evidence" value="ECO:0000315"/>
    <property type="project" value="CGD"/>
</dbReference>
<dbReference type="GO" id="GO:0034599">
    <property type="term" value="P:cellular response to oxidative stress"/>
    <property type="evidence" value="ECO:0000315"/>
    <property type="project" value="CGD"/>
</dbReference>
<dbReference type="GO" id="GO:0030447">
    <property type="term" value="P:filamentous growth"/>
    <property type="evidence" value="ECO:0000315"/>
    <property type="project" value="CGD"/>
</dbReference>
<dbReference type="GO" id="GO:0044182">
    <property type="term" value="P:filamentous growth of a population of unicellular organisms"/>
    <property type="evidence" value="ECO:0000315"/>
    <property type="project" value="CGD"/>
</dbReference>
<dbReference type="GO" id="GO:0036180">
    <property type="term" value="P:filamentous growth of a population of unicellular organisms in response to biotic stimulus"/>
    <property type="evidence" value="ECO:0000315"/>
    <property type="project" value="CGD"/>
</dbReference>
<dbReference type="GO" id="GO:0036178">
    <property type="term" value="P:filamentous growth of a population of unicellular organisms in response to neutral pH"/>
    <property type="evidence" value="ECO:0000315"/>
    <property type="project" value="CGD"/>
</dbReference>
<dbReference type="GO" id="GO:0044180">
    <property type="term" value="P:filamentous growth of a unicellular organism"/>
    <property type="evidence" value="ECO:0000315"/>
    <property type="project" value="CGD"/>
</dbReference>
<dbReference type="GO" id="GO:0009272">
    <property type="term" value="P:fungal-type cell wall biogenesis"/>
    <property type="evidence" value="ECO:0000315"/>
    <property type="project" value="CGD"/>
</dbReference>
<dbReference type="GO" id="GO:0031505">
    <property type="term" value="P:fungal-type cell wall organization"/>
    <property type="evidence" value="ECO:0000315"/>
    <property type="project" value="CGD"/>
</dbReference>
<dbReference type="GO" id="GO:0007232">
    <property type="term" value="P:osmosensory signaling pathway via Sho1 osmosensor"/>
    <property type="evidence" value="ECO:0000315"/>
    <property type="project" value="CGD"/>
</dbReference>
<dbReference type="GO" id="GO:0090033">
    <property type="term" value="P:positive regulation of filamentous growth"/>
    <property type="evidence" value="ECO:0000315"/>
    <property type="project" value="CGD"/>
</dbReference>
<dbReference type="GO" id="GO:1900430">
    <property type="term" value="P:positive regulation of filamentous growth of a population of unicellular organisms"/>
    <property type="evidence" value="ECO:0000315"/>
    <property type="project" value="CGD"/>
</dbReference>
<dbReference type="GO" id="GO:0030833">
    <property type="term" value="P:regulation of actin filament polymerization"/>
    <property type="evidence" value="ECO:0000318"/>
    <property type="project" value="GO_Central"/>
</dbReference>
<dbReference type="CDD" id="cd11855">
    <property type="entry name" value="SH3_Sho1p"/>
    <property type="match status" value="1"/>
</dbReference>
<dbReference type="FunFam" id="2.30.30.40:FF:000213">
    <property type="entry name" value="High osmolarity signaling protein SHO1"/>
    <property type="match status" value="1"/>
</dbReference>
<dbReference type="Gene3D" id="2.30.30.40">
    <property type="entry name" value="SH3 Domains"/>
    <property type="match status" value="1"/>
</dbReference>
<dbReference type="InterPro" id="IPR036028">
    <property type="entry name" value="SH3-like_dom_sf"/>
</dbReference>
<dbReference type="InterPro" id="IPR001452">
    <property type="entry name" value="SH3_domain"/>
</dbReference>
<dbReference type="InterPro" id="IPR035522">
    <property type="entry name" value="Sho1_SH3"/>
</dbReference>
<dbReference type="PANTHER" id="PTHR15735">
    <property type="entry name" value="FCH AND DOUBLE SH3 DOMAINS PROTEIN"/>
    <property type="match status" value="1"/>
</dbReference>
<dbReference type="PANTHER" id="PTHR15735:SF20">
    <property type="entry name" value="HIGH OSMOLARITY SIGNALING PROTEIN SHO1"/>
    <property type="match status" value="1"/>
</dbReference>
<dbReference type="Pfam" id="PF14604">
    <property type="entry name" value="SH3_9"/>
    <property type="match status" value="1"/>
</dbReference>
<dbReference type="PRINTS" id="PR00452">
    <property type="entry name" value="SH3DOMAIN"/>
</dbReference>
<dbReference type="SMART" id="SM00326">
    <property type="entry name" value="SH3"/>
    <property type="match status" value="1"/>
</dbReference>
<dbReference type="SUPFAM" id="SSF50044">
    <property type="entry name" value="SH3-domain"/>
    <property type="match status" value="1"/>
</dbReference>
<dbReference type="PROSITE" id="PS50002">
    <property type="entry name" value="SH3"/>
    <property type="match status" value="1"/>
</dbReference>
<feature type="chain" id="PRO_0000410363" description="High osmolarity signaling protein SHO1">
    <location>
        <begin position="1"/>
        <end position="388"/>
    </location>
</feature>
<feature type="topological domain" description="Cytoplasmic" evidence="2">
    <location>
        <begin position="1"/>
        <end position="12"/>
    </location>
</feature>
<feature type="transmembrane region" description="Helical" evidence="2">
    <location>
        <begin position="13"/>
        <end position="33"/>
    </location>
</feature>
<feature type="topological domain" description="Extracellular" evidence="2">
    <location>
        <begin position="34"/>
        <end position="42"/>
    </location>
</feature>
<feature type="transmembrane region" description="Helical" evidence="2">
    <location>
        <begin position="43"/>
        <end position="63"/>
    </location>
</feature>
<feature type="topological domain" description="Cytoplasmic" evidence="2">
    <location>
        <begin position="64"/>
        <end position="65"/>
    </location>
</feature>
<feature type="transmembrane region" description="Helical" evidence="2">
    <location>
        <begin position="66"/>
        <end position="86"/>
    </location>
</feature>
<feature type="topological domain" description="Extracellular" evidence="2">
    <location>
        <begin position="87"/>
        <end position="101"/>
    </location>
</feature>
<feature type="transmembrane region" description="Helical" evidence="2">
    <location>
        <begin position="102"/>
        <end position="122"/>
    </location>
</feature>
<feature type="topological domain" description="Cytoplasmic" evidence="2">
    <location>
        <begin position="123"/>
        <end position="388"/>
    </location>
</feature>
<feature type="domain" description="SH3" evidence="3">
    <location>
        <begin position="327"/>
        <end position="388"/>
    </location>
</feature>
<feature type="region of interest" description="Disordered" evidence="4">
    <location>
        <begin position="226"/>
        <end position="319"/>
    </location>
</feature>
<feature type="compositionally biased region" description="Low complexity" evidence="4">
    <location>
        <begin position="239"/>
        <end position="249"/>
    </location>
</feature>
<feature type="compositionally biased region" description="Polar residues" evidence="4">
    <location>
        <begin position="250"/>
        <end position="266"/>
    </location>
</feature>
<feature type="compositionally biased region" description="Gly residues" evidence="4">
    <location>
        <begin position="272"/>
        <end position="282"/>
    </location>
</feature>
<feature type="compositionally biased region" description="Gly residues" evidence="4">
    <location>
        <begin position="291"/>
        <end position="301"/>
    </location>
</feature>
<feature type="compositionally biased region" description="Polar residues" evidence="4">
    <location>
        <begin position="310"/>
        <end position="319"/>
    </location>
</feature>
<feature type="sequence conflict" description="In Ref. 1; CAC81238." evidence="12" ref="1">
    <original>G</original>
    <variation>D</variation>
    <location>
        <position position="227"/>
    </location>
</feature>
<feature type="sequence conflict" description="In Ref. 1; CAC81238." evidence="12" ref="1">
    <original>T</original>
    <variation>I</variation>
    <location>
        <position position="238"/>
    </location>
</feature>
<feature type="sequence conflict" description="In Ref. 1; CAC81238." evidence="12" ref="1">
    <original>I</original>
    <variation>V</variation>
    <location>
        <position position="240"/>
    </location>
</feature>
<feature type="sequence conflict" description="In Ref. 1; CAC81238." evidence="12" ref="1">
    <original>A</original>
    <variation>T</variation>
    <location>
        <position position="274"/>
    </location>
</feature>
<feature type="sequence conflict" description="In Ref. 1; CAC81238." evidence="12" ref="1">
    <location>
        <position position="296"/>
    </location>
</feature>
<proteinExistence type="evidence at transcript level"/>